<keyword id="KW-0202">Cytokine</keyword>
<keyword id="KW-1015">Disulfide bond</keyword>
<keyword id="KW-0325">Glycoprotein</keyword>
<keyword id="KW-0339">Growth factor</keyword>
<keyword id="KW-1185">Reference proteome</keyword>
<keyword id="KW-0964">Secreted</keyword>
<keyword id="KW-0732">Signal</keyword>
<proteinExistence type="evidence at transcript level"/>
<sequence length="152" mass="17242">MSRLPVLLLLQLLVRPGLQAPMTQTTSLKTSWVNCSNMIDEIITHLKQPPLPLLDFNNLNGEDQDILMENNLRRPNLEAFNRAVKSLQNASAIESILKNLLPCLPLATAAPTRHPIRIKDGDWNEFRRKLTFYLKTLENAQAQQTTLSLAIF</sequence>
<comment type="function">
    <text>Granulocyte/macrophage colony-stimulating factors are cytokines that act in hematopoiesis by controlling the production, differentiation, and function of 2 related white cell populations of the blood, the granulocytes and the monocytes-macrophages.</text>
</comment>
<comment type="function">
    <text>This CSF induces granulocytes, macrophages, mast cells, stem cells, erythroid cells, eosinophils and megakaryocytes.</text>
</comment>
<comment type="subunit">
    <text evidence="1">Monomer.</text>
</comment>
<comment type="subcellular location">
    <subcellularLocation>
        <location>Secreted</location>
    </subcellularLocation>
</comment>
<comment type="tissue specificity">
    <text>Activated T-cells, mast cells, natural killer cells.</text>
</comment>
<comment type="similarity">
    <text evidence="3">Belongs to the IL-3 family.</text>
</comment>
<protein>
    <recommendedName>
        <fullName>Interleukin-3</fullName>
        <shortName>IL-3</shortName>
    </recommendedName>
    <alternativeName>
        <fullName>Hematopoietic growth factor</fullName>
    </alternativeName>
    <alternativeName>
        <fullName>Mast cell growth factor</fullName>
        <shortName>MCGF</shortName>
    </alternativeName>
    <alternativeName>
        <fullName>Multipotential colony-stimulating factor</fullName>
    </alternativeName>
    <alternativeName>
        <fullName>P-cell-stimulating factor</fullName>
    </alternativeName>
</protein>
<feature type="signal peptide" evidence="1">
    <location>
        <begin position="1"/>
        <end position="19"/>
    </location>
</feature>
<feature type="chain" id="PRO_0000015520" description="Interleukin-3">
    <location>
        <begin position="20"/>
        <end position="152"/>
    </location>
</feature>
<feature type="glycosylation site" description="N-linked (GlcNAc...) asparagine" evidence="2">
    <location>
        <position position="34"/>
    </location>
</feature>
<feature type="glycosylation site" description="N-linked (GlcNAc...) asparagine" evidence="2">
    <location>
        <position position="89"/>
    </location>
</feature>
<feature type="disulfide bond" evidence="1">
    <location>
        <begin position="35"/>
        <end position="103"/>
    </location>
</feature>
<name>IL3_PANTR</name>
<organism>
    <name type="scientific">Pan troglodytes</name>
    <name type="common">Chimpanzee</name>
    <dbReference type="NCBI Taxonomy" id="9598"/>
    <lineage>
        <taxon>Eukaryota</taxon>
        <taxon>Metazoa</taxon>
        <taxon>Chordata</taxon>
        <taxon>Craniata</taxon>
        <taxon>Vertebrata</taxon>
        <taxon>Euteleostomi</taxon>
        <taxon>Mammalia</taxon>
        <taxon>Eutheria</taxon>
        <taxon>Euarchontoglires</taxon>
        <taxon>Primates</taxon>
        <taxon>Haplorrhini</taxon>
        <taxon>Catarrhini</taxon>
        <taxon>Hominidae</taxon>
        <taxon>Pan</taxon>
    </lineage>
</organism>
<accession>Q28809</accession>
<gene>
    <name type="primary">IL3</name>
</gene>
<reference key="1">
    <citation type="journal article" date="1994" name="Biochim. Biophys. Acta">
        <title>Cloning and expression of interleukin-3 genes of chimpanzee and New World monkeys.</title>
        <authorList>
            <person name="Burger H."/>
            <person name="Mostert M.C."/>
            <person name="Kok E.M."/>
            <person name="Wagemaker G."/>
            <person name="Dorssers L.C.J."/>
        </authorList>
    </citation>
    <scope>NUCLEOTIDE SEQUENCE [GENOMIC DNA]</scope>
</reference>
<reference key="2">
    <citation type="journal article" date="1994" name="J. Mol. Evol.">
        <title>Molecular evolution of interleukin-3.</title>
        <authorList>
            <person name="Burger H."/>
            <person name="Wagemaker G."/>
            <person name="Leunissen J.A.M."/>
            <person name="Dorssers L.C.J."/>
        </authorList>
    </citation>
    <scope>NUCLEOTIDE SEQUENCE [GENOMIC DNA]</scope>
</reference>
<evidence type="ECO:0000250" key="1"/>
<evidence type="ECO:0000255" key="2"/>
<evidence type="ECO:0000305" key="3"/>
<dbReference type="EMBL" id="X74875">
    <property type="protein sequence ID" value="CAA52863.1"/>
    <property type="molecule type" value="Genomic_DNA"/>
</dbReference>
<dbReference type="EMBL" id="X74876">
    <property type="protein sequence ID" value="CAA52863.1"/>
    <property type="status" value="JOINED"/>
    <property type="molecule type" value="Genomic_DNA"/>
</dbReference>
<dbReference type="PIR" id="S42720">
    <property type="entry name" value="S42720"/>
</dbReference>
<dbReference type="RefSeq" id="NP_001129106.1">
    <property type="nucleotide sequence ID" value="NM_001135634.1"/>
</dbReference>
<dbReference type="SMR" id="Q28809"/>
<dbReference type="FunCoup" id="Q28809">
    <property type="interactions" value="825"/>
</dbReference>
<dbReference type="STRING" id="9598.ENSPTRP00000029447"/>
<dbReference type="GlyCosmos" id="Q28809">
    <property type="glycosylation" value="2 sites, No reported glycans"/>
</dbReference>
<dbReference type="PaxDb" id="9598-ENSPTRP00000029447"/>
<dbReference type="GeneID" id="471626"/>
<dbReference type="KEGG" id="ptr:471626"/>
<dbReference type="CTD" id="3562"/>
<dbReference type="eggNOG" id="ENOG502TD4X">
    <property type="taxonomic scope" value="Eukaryota"/>
</dbReference>
<dbReference type="InParanoid" id="Q28809"/>
<dbReference type="OrthoDB" id="15803at9604"/>
<dbReference type="Proteomes" id="UP000002277">
    <property type="component" value="Unplaced"/>
</dbReference>
<dbReference type="GO" id="GO:0005615">
    <property type="term" value="C:extracellular space"/>
    <property type="evidence" value="ECO:0000250"/>
    <property type="project" value="UniProtKB"/>
</dbReference>
<dbReference type="GO" id="GO:0005125">
    <property type="term" value="F:cytokine activity"/>
    <property type="evidence" value="ECO:0000250"/>
    <property type="project" value="UniProtKB"/>
</dbReference>
<dbReference type="GO" id="GO:0008083">
    <property type="term" value="F:growth factor activity"/>
    <property type="evidence" value="ECO:0007669"/>
    <property type="project" value="UniProtKB-KW"/>
</dbReference>
<dbReference type="GO" id="GO:0005135">
    <property type="term" value="F:interleukin-3 receptor binding"/>
    <property type="evidence" value="ECO:0007669"/>
    <property type="project" value="InterPro"/>
</dbReference>
<dbReference type="GO" id="GO:0006955">
    <property type="term" value="P:immune response"/>
    <property type="evidence" value="ECO:0007669"/>
    <property type="project" value="InterPro"/>
</dbReference>
<dbReference type="GO" id="GO:0038156">
    <property type="term" value="P:interleukin-3-mediated signaling pathway"/>
    <property type="evidence" value="ECO:0000318"/>
    <property type="project" value="GO_Central"/>
</dbReference>
<dbReference type="GO" id="GO:0008284">
    <property type="term" value="P:positive regulation of cell population proliferation"/>
    <property type="evidence" value="ECO:0000250"/>
    <property type="project" value="UniProtKB"/>
</dbReference>
<dbReference type="Gene3D" id="1.20.1250.10">
    <property type="match status" value="1"/>
</dbReference>
<dbReference type="InterPro" id="IPR009079">
    <property type="entry name" value="4_helix_cytokine-like_core"/>
</dbReference>
<dbReference type="InterPro" id="IPR002183">
    <property type="entry name" value="IL-3"/>
</dbReference>
<dbReference type="PANTHER" id="PTHR48489">
    <property type="entry name" value="INTERLEUKIN-3"/>
    <property type="match status" value="1"/>
</dbReference>
<dbReference type="PANTHER" id="PTHR48489:SF1">
    <property type="entry name" value="INTERLEUKIN-3"/>
    <property type="match status" value="1"/>
</dbReference>
<dbReference type="Pfam" id="PF02059">
    <property type="entry name" value="IL3"/>
    <property type="match status" value="1"/>
</dbReference>
<dbReference type="PIRSF" id="PIRSF001939">
    <property type="entry name" value="IL-3"/>
    <property type="match status" value="1"/>
</dbReference>
<dbReference type="PRINTS" id="PR00430">
    <property type="entry name" value="INTERLEUKIN3"/>
</dbReference>
<dbReference type="SUPFAM" id="SSF47266">
    <property type="entry name" value="4-helical cytokines"/>
    <property type="match status" value="1"/>
</dbReference>